<name>TMOD4_BOVIN</name>
<comment type="function">
    <text evidence="1">Blocks the elongation and depolymerization of the actin filaments at the pointed end. The Tmod/TM complex contributes to the formation of the short actin protofilament, which in turn defines the geometry of the membrane skeleton (By similarity).</text>
</comment>
<comment type="subunit">
    <text evidence="1">Binds to the N-terminus of tropomyosin and to actin.</text>
</comment>
<comment type="subcellular location">
    <subcellularLocation>
        <location evidence="2">Cytoplasm</location>
        <location evidence="2">Cytoskeleton</location>
    </subcellularLocation>
    <text evidence="2">In myofibrils with sarcomeric structure, localizes to the pointed end of actin thin filaments.</text>
</comment>
<comment type="similarity">
    <text evidence="4">Belongs to the tropomodulin family.</text>
</comment>
<protein>
    <recommendedName>
        <fullName>Tropomodulin-4</fullName>
    </recommendedName>
    <alternativeName>
        <fullName>Skeletal muscle tropomodulin</fullName>
        <shortName>Sk-Tmod</shortName>
    </alternativeName>
</protein>
<dbReference type="EMBL" id="BC120356">
    <property type="protein sequence ID" value="AAI20357.1"/>
    <property type="molecule type" value="mRNA"/>
</dbReference>
<dbReference type="RefSeq" id="NP_001068683.1">
    <property type="nucleotide sequence ID" value="NM_001075215.1"/>
</dbReference>
<dbReference type="RefSeq" id="XP_005203909.1">
    <property type="nucleotide sequence ID" value="XM_005203852.5"/>
</dbReference>
<dbReference type="SMR" id="Q0VC48"/>
<dbReference type="FunCoup" id="Q0VC48">
    <property type="interactions" value="202"/>
</dbReference>
<dbReference type="STRING" id="9913.ENSBTAP00000043640"/>
<dbReference type="PaxDb" id="9913-ENSBTAP00000043640"/>
<dbReference type="Ensembl" id="ENSBTAT00000046331.2">
    <property type="protein sequence ID" value="ENSBTAP00000043640.1"/>
    <property type="gene ID" value="ENSBTAG00000018071.5"/>
</dbReference>
<dbReference type="GeneID" id="505645"/>
<dbReference type="KEGG" id="bta:505645"/>
<dbReference type="CTD" id="29765"/>
<dbReference type="VEuPathDB" id="HostDB:ENSBTAG00000018071"/>
<dbReference type="VGNC" id="VGNC:36137">
    <property type="gene designation" value="TMOD4"/>
</dbReference>
<dbReference type="eggNOG" id="KOG3735">
    <property type="taxonomic scope" value="Eukaryota"/>
</dbReference>
<dbReference type="GeneTree" id="ENSGT00940000158734"/>
<dbReference type="HOGENOM" id="CLU_031052_0_1_1"/>
<dbReference type="InParanoid" id="Q0VC48"/>
<dbReference type="OMA" id="SDAEMCD"/>
<dbReference type="OrthoDB" id="2163268at2759"/>
<dbReference type="TreeFam" id="TF315841"/>
<dbReference type="Reactome" id="R-BTA-390522">
    <property type="pathway name" value="Striated Muscle Contraction"/>
</dbReference>
<dbReference type="Proteomes" id="UP000009136">
    <property type="component" value="Chromosome 3"/>
</dbReference>
<dbReference type="Bgee" id="ENSBTAG00000018071">
    <property type="expression patterns" value="Expressed in longissimus thoracis muscle and 103 other cell types or tissues"/>
</dbReference>
<dbReference type="GO" id="GO:0005856">
    <property type="term" value="C:cytoskeleton"/>
    <property type="evidence" value="ECO:0000318"/>
    <property type="project" value="GO_Central"/>
</dbReference>
<dbReference type="GO" id="GO:0030016">
    <property type="term" value="C:myofibril"/>
    <property type="evidence" value="ECO:0000318"/>
    <property type="project" value="GO_Central"/>
</dbReference>
<dbReference type="GO" id="GO:0005865">
    <property type="term" value="C:striated muscle thin filament"/>
    <property type="evidence" value="ECO:0000318"/>
    <property type="project" value="GO_Central"/>
</dbReference>
<dbReference type="GO" id="GO:0003779">
    <property type="term" value="F:actin binding"/>
    <property type="evidence" value="ECO:0007669"/>
    <property type="project" value="UniProtKB-KW"/>
</dbReference>
<dbReference type="GO" id="GO:0005523">
    <property type="term" value="F:tropomyosin binding"/>
    <property type="evidence" value="ECO:0000318"/>
    <property type="project" value="GO_Central"/>
</dbReference>
<dbReference type="GO" id="GO:0007015">
    <property type="term" value="P:actin filament organization"/>
    <property type="evidence" value="ECO:0000318"/>
    <property type="project" value="GO_Central"/>
</dbReference>
<dbReference type="GO" id="GO:0006936">
    <property type="term" value="P:muscle contraction"/>
    <property type="evidence" value="ECO:0000318"/>
    <property type="project" value="GO_Central"/>
</dbReference>
<dbReference type="GO" id="GO:0030239">
    <property type="term" value="P:myofibril assembly"/>
    <property type="evidence" value="ECO:0000318"/>
    <property type="project" value="GO_Central"/>
</dbReference>
<dbReference type="GO" id="GO:0051694">
    <property type="term" value="P:pointed-end actin filament capping"/>
    <property type="evidence" value="ECO:0007669"/>
    <property type="project" value="InterPro"/>
</dbReference>
<dbReference type="FunFam" id="3.80.10.10:FF:000006">
    <property type="entry name" value="Tropomodulin 2"/>
    <property type="match status" value="1"/>
</dbReference>
<dbReference type="Gene3D" id="3.80.10.10">
    <property type="entry name" value="Ribonuclease Inhibitor"/>
    <property type="match status" value="1"/>
</dbReference>
<dbReference type="InterPro" id="IPR032675">
    <property type="entry name" value="LRR_dom_sf"/>
</dbReference>
<dbReference type="InterPro" id="IPR004934">
    <property type="entry name" value="TMOD"/>
</dbReference>
<dbReference type="PANTHER" id="PTHR10901">
    <property type="entry name" value="TROPOMODULIN"/>
    <property type="match status" value="1"/>
</dbReference>
<dbReference type="PANTHER" id="PTHR10901:SF9">
    <property type="entry name" value="TROPOMODULIN-4"/>
    <property type="match status" value="1"/>
</dbReference>
<dbReference type="Pfam" id="PF03250">
    <property type="entry name" value="Tropomodulin"/>
    <property type="match status" value="1"/>
</dbReference>
<dbReference type="SUPFAM" id="SSF52047">
    <property type="entry name" value="RNI-like"/>
    <property type="match status" value="1"/>
</dbReference>
<evidence type="ECO:0000250" key="1"/>
<evidence type="ECO:0000250" key="2">
    <source>
        <dbReference type="UniProtKB" id="Q9NZQ9"/>
    </source>
</evidence>
<evidence type="ECO:0000256" key="3">
    <source>
        <dbReference type="SAM" id="MobiDB-lite"/>
    </source>
</evidence>
<evidence type="ECO:0000305" key="4"/>
<reference key="1">
    <citation type="submission" date="2006-08" db="EMBL/GenBank/DDBJ databases">
        <authorList>
            <consortium name="NIH - Mammalian Gene Collection (MGC) project"/>
        </authorList>
    </citation>
    <scope>NUCLEOTIDE SEQUENCE [LARGE SCALE MRNA]</scope>
    <source>
        <strain>Hereford</strain>
        <tissue>Fetal muscle</tissue>
    </source>
</reference>
<proteinExistence type="evidence at transcript level"/>
<feature type="chain" id="PRO_0000281915" description="Tropomodulin-4">
    <location>
        <begin position="1"/>
        <end position="345"/>
    </location>
</feature>
<feature type="region of interest" description="Disordered" evidence="3">
    <location>
        <begin position="42"/>
        <end position="63"/>
    </location>
</feature>
<organism>
    <name type="scientific">Bos taurus</name>
    <name type="common">Bovine</name>
    <dbReference type="NCBI Taxonomy" id="9913"/>
    <lineage>
        <taxon>Eukaryota</taxon>
        <taxon>Metazoa</taxon>
        <taxon>Chordata</taxon>
        <taxon>Craniata</taxon>
        <taxon>Vertebrata</taxon>
        <taxon>Euteleostomi</taxon>
        <taxon>Mammalia</taxon>
        <taxon>Eutheria</taxon>
        <taxon>Laurasiatheria</taxon>
        <taxon>Artiodactyla</taxon>
        <taxon>Ruminantia</taxon>
        <taxon>Pecora</taxon>
        <taxon>Bovidae</taxon>
        <taxon>Bovinae</taxon>
        <taxon>Bos</taxon>
    </lineage>
</organism>
<accession>Q0VC48</accession>
<sequence>MSSYQKELEKYRDIDEDEILKTLSPEELEQLDCELQEMDPENMLLPAGLRQRDQTKKSPTGPLDREALLQYLEQQALEVKERDDLVPFTGEKKGKPYIQPKREIPVEEQVTLEPELEEALAHATDAEMCDIAAILGMYTLMSNKQYYDAICSGEICNTEGISSVVQPDKYKPVPDEPPNPTNIEEILKSVRSNDKEVEEVNLNNIQDIPIPMLTELCEAMKTNTHVRSFSLVATRSGDPVANAVADMLRENRSLQSLNIESNFISSTGLMAVLKAVRENATLTELRVDNQRQWPGDAVEMEMATVLEQCPSIVRFGYHFTQQGPRARAAQAMTRNNELRRQQKKR</sequence>
<keyword id="KW-0009">Actin-binding</keyword>
<keyword id="KW-0963">Cytoplasm</keyword>
<keyword id="KW-0206">Cytoskeleton</keyword>
<keyword id="KW-1185">Reference proteome</keyword>
<gene>
    <name type="primary">TMOD4</name>
</gene>